<reference key="1">
    <citation type="journal article" date="2004" name="Nat. Biotechnol.">
        <title>The genome sequence of the anaerobic, sulfate-reducing bacterium Desulfovibrio vulgaris Hildenborough.</title>
        <authorList>
            <person name="Heidelberg J.F."/>
            <person name="Seshadri R."/>
            <person name="Haveman S.A."/>
            <person name="Hemme C.L."/>
            <person name="Paulsen I.T."/>
            <person name="Kolonay J.F."/>
            <person name="Eisen J.A."/>
            <person name="Ward N.L."/>
            <person name="Methe B.A."/>
            <person name="Brinkac L.M."/>
            <person name="Daugherty S.C."/>
            <person name="DeBoy R.T."/>
            <person name="Dodson R.J."/>
            <person name="Durkin A.S."/>
            <person name="Madupu R."/>
            <person name="Nelson W.C."/>
            <person name="Sullivan S.A."/>
            <person name="Fouts D.E."/>
            <person name="Haft D.H."/>
            <person name="Selengut J."/>
            <person name="Peterson J.D."/>
            <person name="Davidsen T.M."/>
            <person name="Zafar N."/>
            <person name="Zhou L."/>
            <person name="Radune D."/>
            <person name="Dimitrov G."/>
            <person name="Hance M."/>
            <person name="Tran K."/>
            <person name="Khouri H.M."/>
            <person name="Gill J."/>
            <person name="Utterback T.R."/>
            <person name="Feldblyum T.V."/>
            <person name="Wall J.D."/>
            <person name="Voordouw G."/>
            <person name="Fraser C.M."/>
        </authorList>
    </citation>
    <scope>NUCLEOTIDE SEQUENCE [LARGE SCALE GENOMIC DNA]</scope>
    <source>
        <strain>ATCC 29579 / DSM 644 / CCUG 34227 / NCIMB 8303 / VKM B-1760 / Hildenborough</strain>
    </source>
</reference>
<reference key="2">
    <citation type="journal article" date="2010" name="J. Biol. Chem.">
        <title>The Qrc membrane complex, related to the alternative complex III, is a menaquinone reductase involved in sulfate respiration.</title>
        <authorList>
            <person name="Venceslau S.S."/>
            <person name="Lino R.R."/>
            <person name="Pereira I.A."/>
        </authorList>
    </citation>
    <scope>PROTEIN SEQUENCE OF N-TERMINUS</scope>
    <scope>FUNCTION</scope>
    <scope>CATALYTIC ACTIVITY</scope>
    <scope>SUBUNIT</scope>
    <scope>SUBCELLULAR LOCATION</scope>
    <source>
        <strain>ATCC 29579 / DSM 644 / CCUG 34227 / NCIMB 8303 / VKM B-1760 / Hildenborough</strain>
    </source>
</reference>
<reference key="3">
    <citation type="journal article" date="2011" name="FEBS Lett.">
        <title>EPR characterization of the new Qrc complex from sulfate reducing bacteria and its ability to form a supercomplex with hydrogenase and TpIc3.</title>
        <authorList>
            <person name="Venceslau S.S."/>
            <person name="Matos D."/>
            <person name="Pereira I.A."/>
        </authorList>
    </citation>
    <scope>INTERACTION WITH [NIFE] HYDROGENASE AND TPIC(3)</scope>
    <source>
        <strain>ATCC 29579 / DSM 644 / CCUG 34227 / NCIMB 8303 / VKM B-1760 / Hildenborough</strain>
    </source>
</reference>
<organism>
    <name type="scientific">Nitratidesulfovibrio vulgaris (strain ATCC 29579 / DSM 644 / CCUG 34227 / NCIMB 8303 / VKM B-1760 / Hildenborough)</name>
    <name type="common">Desulfovibrio vulgaris</name>
    <dbReference type="NCBI Taxonomy" id="882"/>
    <lineage>
        <taxon>Bacteria</taxon>
        <taxon>Pseudomonadati</taxon>
        <taxon>Thermodesulfobacteriota</taxon>
        <taxon>Desulfovibrionia</taxon>
        <taxon>Desulfovibrionales</taxon>
        <taxon>Desulfovibrionaceae</taxon>
        <taxon>Nitratidesulfovibrio</taxon>
    </lineage>
</organism>
<protein>
    <recommendedName>
        <fullName evidence="6">Menaquinone reductase, integral membrane subunit</fullName>
    </recommendedName>
    <alternativeName>
        <fullName evidence="4">Quinone reductase complex subunit D</fullName>
    </alternativeName>
    <alternativeName>
        <fullName evidence="4">Type I cytochrome c3:menaquinone oxidoreductase subunit D</fullName>
    </alternativeName>
</protein>
<sequence length="419" mass="47537">MDKNYNLPVDAELFPEGCERCSLSKFMMWMAFVFVFFGWGLYAAYRVLAEGLGVTGLDDYFGFGLWITFDLAVIALGAGAFFSGLLRYILNIDPLKNIINLAVIIGFLCYSGAMLVLVLDIGQPLRAWFGYWHANVHSMLTEVIFCITCYCLVLIIEYVPLILENRQLNKNKLVHAVAHNFHVMMPLFAGIGAFLSTFHQGSLGGMYGVLFGRPYIYREGFFIWPWTFFLYVLSAVGSGPVFTVLVCTLMEKMTGRKLVSWEVKSLMGKIAGTMLMVYLIFKFADTYAWAYDLLPRQGLTFDQMFTSGWIYGKWMLWAELFYCGLVPAIILIVPALRNNPVLFYSAAILDCIGITINRYVMTVQALAIPVMPFDSWESYLPNWAEWGASVMIVAYAALVLSLSYRYLPIFPQEAELNRK</sequence>
<name>QRCD_NITV2</name>
<evidence type="ECO:0000255" key="1"/>
<evidence type="ECO:0000269" key="2">
    <source>
    </source>
</evidence>
<evidence type="ECO:0000269" key="3">
    <source>
    </source>
</evidence>
<evidence type="ECO:0000303" key="4">
    <source>
    </source>
</evidence>
<evidence type="ECO:0000305" key="5"/>
<evidence type="ECO:0000305" key="6">
    <source>
    </source>
</evidence>
<evidence type="ECO:0000312" key="7">
    <source>
        <dbReference type="EMBL" id="AAS95173.1"/>
    </source>
</evidence>
<feature type="chain" id="PRO_0000438001" description="Menaquinone reductase, integral membrane subunit">
    <location>
        <begin position="1"/>
        <end position="419"/>
    </location>
</feature>
<feature type="transmembrane region" description="Helical" evidence="1">
    <location>
        <begin position="23"/>
        <end position="43"/>
    </location>
</feature>
<feature type="transmembrane region" description="Helical" evidence="1">
    <location>
        <begin position="61"/>
        <end position="81"/>
    </location>
</feature>
<feature type="transmembrane region" description="Helical" evidence="1">
    <location>
        <begin position="98"/>
        <end position="118"/>
    </location>
</feature>
<feature type="transmembrane region" description="Helical" evidence="1">
    <location>
        <begin position="143"/>
        <end position="163"/>
    </location>
</feature>
<feature type="transmembrane region" description="Helical" evidence="1">
    <location>
        <begin position="176"/>
        <end position="196"/>
    </location>
</feature>
<feature type="transmembrane region" description="Helical" evidence="1">
    <location>
        <begin position="221"/>
        <end position="241"/>
    </location>
</feature>
<feature type="transmembrane region" description="Helical" evidence="1">
    <location>
        <begin position="270"/>
        <end position="290"/>
    </location>
</feature>
<feature type="transmembrane region" description="Helical" evidence="1">
    <location>
        <begin position="316"/>
        <end position="336"/>
    </location>
</feature>
<feature type="transmembrane region" description="Helical" evidence="1">
    <location>
        <begin position="341"/>
        <end position="361"/>
    </location>
</feature>
<feature type="transmembrane region" description="Helical" evidence="1">
    <location>
        <begin position="383"/>
        <end position="403"/>
    </location>
</feature>
<accession>Q72E86</accession>
<comment type="function">
    <text evidence="2">Component of the respiratory Qrc complex, that catalyzes the reduction of the menaquinone pool using electrons transferred from the reduced periplasmic cytochrome c3, and which is probably involved in sulfate respiration. Is likely essential for growth on H(2) or formate since the periplasmic hydrogenases and/or formate dehydrogenases act as primary electron donors for the Qrc complex. The QrcD subunit anchors the protein complex to the membrane and likely interacts with the quinone pool.</text>
</comment>
<comment type="subunit">
    <text evidence="2 3">The Qrc complex is composed of four subunits: QrcA, QrcB, QrcC and QrcD (PubMed:20498375). Can form a supercomplex with the [NiFe] hydrogenase HynA1 and the tetraheme Type I cytochrome c3 TpIc(3), its physiological electron donors (PubMed:21651911).</text>
</comment>
<comment type="subcellular location">
    <subcellularLocation>
        <location evidence="6">Cell inner membrane</location>
        <topology evidence="1 6">Multi-pass membrane protein</topology>
    </subcellularLocation>
</comment>
<comment type="similarity">
    <text evidence="5">Belongs to the NrfD family.</text>
</comment>
<keyword id="KW-0997">Cell inner membrane</keyword>
<keyword id="KW-1003">Cell membrane</keyword>
<keyword id="KW-0903">Direct protein sequencing</keyword>
<keyword id="KW-0249">Electron transport</keyword>
<keyword id="KW-0472">Membrane</keyword>
<keyword id="KW-1185">Reference proteome</keyword>
<keyword id="KW-0763">Sulfate respiration</keyword>
<keyword id="KW-0812">Transmembrane</keyword>
<keyword id="KW-1133">Transmembrane helix</keyword>
<keyword id="KW-0813">Transport</keyword>
<gene>
    <name evidence="4" type="primary">qrcD</name>
    <name evidence="7" type="ordered locus">DVU_0692</name>
</gene>
<proteinExistence type="evidence at protein level"/>
<dbReference type="EMBL" id="AE017285">
    <property type="protein sequence ID" value="AAS95173.1"/>
    <property type="molecule type" value="Genomic_DNA"/>
</dbReference>
<dbReference type="RefSeq" id="WP_010937995.1">
    <property type="nucleotide sequence ID" value="NC_002937.3"/>
</dbReference>
<dbReference type="RefSeq" id="YP_009914.1">
    <property type="nucleotide sequence ID" value="NC_002937.3"/>
</dbReference>
<dbReference type="SMR" id="Q72E86"/>
<dbReference type="STRING" id="882.DVU_0692"/>
<dbReference type="PaxDb" id="882-DVU_0692"/>
<dbReference type="EnsemblBacteria" id="AAS95173">
    <property type="protein sequence ID" value="AAS95173"/>
    <property type="gene ID" value="DVU_0692"/>
</dbReference>
<dbReference type="KEGG" id="dvu:DVU_0692"/>
<dbReference type="PATRIC" id="fig|882.5.peg.648"/>
<dbReference type="eggNOG" id="COG5557">
    <property type="taxonomic scope" value="Bacteria"/>
</dbReference>
<dbReference type="HOGENOM" id="CLU_049007_0_0_7"/>
<dbReference type="OrthoDB" id="5440262at2"/>
<dbReference type="PhylomeDB" id="Q72E86"/>
<dbReference type="BioCyc" id="MetaCyc:MONOMER-22157"/>
<dbReference type="Proteomes" id="UP000002194">
    <property type="component" value="Chromosome"/>
</dbReference>
<dbReference type="GO" id="GO:0005886">
    <property type="term" value="C:plasma membrane"/>
    <property type="evidence" value="ECO:0007669"/>
    <property type="project" value="UniProtKB-SubCell"/>
</dbReference>
<dbReference type="GO" id="GO:0009061">
    <property type="term" value="P:anaerobic respiration"/>
    <property type="evidence" value="ECO:0007669"/>
    <property type="project" value="UniProtKB-KW"/>
</dbReference>
<dbReference type="InterPro" id="IPR052049">
    <property type="entry name" value="Electron_transfer_protein"/>
</dbReference>
<dbReference type="InterPro" id="IPR005614">
    <property type="entry name" value="NrfD-like"/>
</dbReference>
<dbReference type="InterPro" id="IPR053549">
    <property type="entry name" value="NrfD_menaquinone_reductase"/>
</dbReference>
<dbReference type="NCBIfam" id="NF041784">
    <property type="entry name" value="mnquin_red_QrcD"/>
    <property type="match status" value="1"/>
</dbReference>
<dbReference type="PANTHER" id="PTHR34856">
    <property type="entry name" value="PROTEIN NRFD"/>
    <property type="match status" value="1"/>
</dbReference>
<dbReference type="PANTHER" id="PTHR34856:SF2">
    <property type="entry name" value="PROTEIN NRFD"/>
    <property type="match status" value="1"/>
</dbReference>
<dbReference type="Pfam" id="PF03916">
    <property type="entry name" value="NrfD"/>
    <property type="match status" value="1"/>
</dbReference>